<organism>
    <name type="scientific">Vaccinia virus (strain L-IVP)</name>
    <name type="common">VACV</name>
    <dbReference type="NCBI Taxonomy" id="31531"/>
    <lineage>
        <taxon>Viruses</taxon>
        <taxon>Varidnaviria</taxon>
        <taxon>Bamfordvirae</taxon>
        <taxon>Nucleocytoviricota</taxon>
        <taxon>Pokkesviricetes</taxon>
        <taxon>Chitovirales</taxon>
        <taxon>Poxviridae</taxon>
        <taxon>Chordopoxvirinae</taxon>
        <taxon>Orthopoxvirus</taxon>
        <taxon>Vaccinia virus</taxon>
    </lineage>
</organism>
<keyword id="KW-0426">Late protein</keyword>
<keyword id="KW-0472">Membrane</keyword>
<keyword id="KW-0812">Transmembrane</keyword>
<keyword id="KW-1133">Transmembrane helix</keyword>
<keyword id="KW-1162">Viral penetration into host cytoplasm</keyword>
<keyword id="KW-0946">Virion</keyword>
<keyword id="KW-1160">Virus entry into host cell</keyword>
<evidence type="ECO:0000250" key="1">
    <source>
        <dbReference type="UniProtKB" id="P68606"/>
    </source>
</evidence>
<evidence type="ECO:0000255" key="2"/>
<evidence type="ECO:0000305" key="3"/>
<reference key="1">
    <citation type="journal article" date="1990" name="Mol. Biol. (Mosk.)">
        <title>Molecular-biological study of vaccinia virus genome. II. Localization and nucleotide sequence of vaccinia virus genes coding for proteins 36K and 12K.</title>
        <authorList>
            <person name="Riazankina O.I."/>
            <person name="Shchelkunov S.N."/>
            <person name="Muravlev A.I."/>
            <person name="Netesova N.A."/>
            <person name="Mikriukov N.N."/>
            <person name="Gutorov V.V."/>
            <person name="Nikulin A.E."/>
            <person name="Kulichkov V.A."/>
            <person name="Malygin E.G."/>
        </authorList>
    </citation>
    <scope>NUCLEOTIDE SEQUENCE [GENOMIC DNA]</scope>
</reference>
<sequence length="73" mass="8499">MDKLYAAIFGVFMGSPEDDLTDFIEIVKSVLSDEKTVTSTNNTGCWGWYWLIIIFFIVLILLLLIYLYLKVVW</sequence>
<organismHost>
    <name type="scientific">Homo sapiens</name>
    <name type="common">Human</name>
    <dbReference type="NCBI Taxonomy" id="9606"/>
</organismHost>
<gene>
    <name type="primary">OPG078</name>
    <name type="ORF">I2L</name>
</gene>
<comment type="function">
    <text evidence="1">Late protein which probably plays a role in virus entry into the host cell.</text>
</comment>
<comment type="subcellular location">
    <subcellularLocation>
        <location evidence="1">Virion membrane</location>
        <topology evidence="1">Single-pass membrane protein</topology>
    </subcellularLocation>
    <text evidence="1">Component of the membrane of the mature virion.</text>
</comment>
<comment type="induction">
    <text>Expressed in the late phase of the viral replicative cycle.</text>
</comment>
<comment type="similarity">
    <text evidence="3">Belongs to the orthopoxvirus OPG078 family.</text>
</comment>
<proteinExistence type="evidence at transcript level"/>
<name>PG078_VACCP</name>
<feature type="chain" id="PRO_0000099567" description="Protein OPG078">
    <location>
        <begin position="1"/>
        <end position="73"/>
    </location>
</feature>
<feature type="transmembrane region" description="Helical" evidence="2">
    <location>
        <begin position="49"/>
        <end position="69"/>
    </location>
</feature>
<dbReference type="EMBL" id="X61165">
    <property type="protein sequence ID" value="CAA43474.1"/>
    <property type="molecule type" value="Genomic_DNA"/>
</dbReference>
<dbReference type="PIR" id="B29889">
    <property type="entry name" value="WZVZI2"/>
</dbReference>
<dbReference type="RefSeq" id="YP_232953.1">
    <property type="nucleotide sequence ID" value="NC_006998.1"/>
</dbReference>
<dbReference type="DNASU" id="3707604"/>
<dbReference type="GeneID" id="3707604"/>
<dbReference type="KEGG" id="vg:3707604"/>
<dbReference type="GO" id="GO:0016020">
    <property type="term" value="C:membrane"/>
    <property type="evidence" value="ECO:0007669"/>
    <property type="project" value="UniProtKB-KW"/>
</dbReference>
<dbReference type="GO" id="GO:0055036">
    <property type="term" value="C:virion membrane"/>
    <property type="evidence" value="ECO:0007669"/>
    <property type="project" value="UniProtKB-SubCell"/>
</dbReference>
<dbReference type="GO" id="GO:0046718">
    <property type="term" value="P:symbiont entry into host cell"/>
    <property type="evidence" value="ECO:0007669"/>
    <property type="project" value="UniProtKB-KW"/>
</dbReference>
<dbReference type="InterPro" id="IPR009175">
    <property type="entry name" value="Poxvirus_I2"/>
</dbReference>
<dbReference type="Pfam" id="PF12575">
    <property type="entry name" value="Pox_EPC_I2-L1"/>
    <property type="match status" value="1"/>
</dbReference>
<dbReference type="PIRSF" id="PIRSF003766">
    <property type="entry name" value="VAC_I2L"/>
    <property type="match status" value="1"/>
</dbReference>
<protein>
    <recommendedName>
        <fullName>Protein OPG078</fullName>
    </recommendedName>
    <alternativeName>
        <fullName>Protein I2</fullName>
    </alternativeName>
</protein>
<accession>P68605</accession>
<accession>P12922</accession>